<reference key="1">
    <citation type="submission" date="2006-09" db="EMBL/GenBank/DDBJ databases">
        <authorList>
            <consortium name="The Klebsiella pneumonia Genome Sequencing Project"/>
            <person name="McClelland M."/>
            <person name="Sanderson E.K."/>
            <person name="Spieth J."/>
            <person name="Clifton W.S."/>
            <person name="Latreille P."/>
            <person name="Sabo A."/>
            <person name="Pepin K."/>
            <person name="Bhonagiri V."/>
            <person name="Porwollik S."/>
            <person name="Ali J."/>
            <person name="Wilson R.K."/>
        </authorList>
    </citation>
    <scope>NUCLEOTIDE SEQUENCE [LARGE SCALE GENOMIC DNA]</scope>
    <source>
        <strain>ATCC 700721 / MGH 78578</strain>
    </source>
</reference>
<proteinExistence type="inferred from homology"/>
<evidence type="ECO:0000255" key="1">
    <source>
        <dbReference type="HAMAP-Rule" id="MF_00409"/>
    </source>
</evidence>
<organism>
    <name type="scientific">Klebsiella pneumoniae subsp. pneumoniae (strain ATCC 700721 / MGH 78578)</name>
    <dbReference type="NCBI Taxonomy" id="272620"/>
    <lineage>
        <taxon>Bacteria</taxon>
        <taxon>Pseudomonadati</taxon>
        <taxon>Pseudomonadota</taxon>
        <taxon>Gammaproteobacteria</taxon>
        <taxon>Enterobacterales</taxon>
        <taxon>Enterobacteriaceae</taxon>
        <taxon>Klebsiella/Raoultella group</taxon>
        <taxon>Klebsiella</taxon>
        <taxon>Klebsiella pneumoniae complex</taxon>
    </lineage>
</organism>
<name>LPXK_KLEP7</name>
<keyword id="KW-0067">ATP-binding</keyword>
<keyword id="KW-0418">Kinase</keyword>
<keyword id="KW-0441">Lipid A biosynthesis</keyword>
<keyword id="KW-0444">Lipid biosynthesis</keyword>
<keyword id="KW-0443">Lipid metabolism</keyword>
<keyword id="KW-0547">Nucleotide-binding</keyword>
<keyword id="KW-0808">Transferase</keyword>
<feature type="chain" id="PRO_1000123721" description="Tetraacyldisaccharide 4'-kinase">
    <location>
        <begin position="1"/>
        <end position="326"/>
    </location>
</feature>
<feature type="binding site" evidence="1">
    <location>
        <begin position="55"/>
        <end position="62"/>
    </location>
    <ligand>
        <name>ATP</name>
        <dbReference type="ChEBI" id="CHEBI:30616"/>
    </ligand>
</feature>
<comment type="function">
    <text evidence="1">Transfers the gamma-phosphate of ATP to the 4'-position of a tetraacyldisaccharide 1-phosphate intermediate (termed DS-1-P) to form tetraacyldisaccharide 1,4'-bis-phosphate (lipid IVA).</text>
</comment>
<comment type="catalytic activity">
    <reaction evidence="1">
        <text>a lipid A disaccharide + ATP = a lipid IVA + ADP + H(+)</text>
        <dbReference type="Rhea" id="RHEA:67840"/>
        <dbReference type="ChEBI" id="CHEBI:15378"/>
        <dbReference type="ChEBI" id="CHEBI:30616"/>
        <dbReference type="ChEBI" id="CHEBI:176343"/>
        <dbReference type="ChEBI" id="CHEBI:176425"/>
        <dbReference type="ChEBI" id="CHEBI:456216"/>
        <dbReference type="EC" id="2.7.1.130"/>
    </reaction>
</comment>
<comment type="pathway">
    <text evidence="1">Glycolipid biosynthesis; lipid IV(A) biosynthesis; lipid IV(A) from (3R)-3-hydroxytetradecanoyl-[acyl-carrier-protein] and UDP-N-acetyl-alpha-D-glucosamine: step 6/6.</text>
</comment>
<comment type="similarity">
    <text evidence="1">Belongs to the LpxK family.</text>
</comment>
<accession>A6T707</accession>
<gene>
    <name evidence="1" type="primary">lpxK</name>
    <name type="ordered locus">KPN78578_09170</name>
    <name type="ORF">KPN_00942</name>
</gene>
<protein>
    <recommendedName>
        <fullName evidence="1">Tetraacyldisaccharide 4'-kinase</fullName>
        <ecNumber evidence="1">2.7.1.130</ecNumber>
    </recommendedName>
    <alternativeName>
        <fullName evidence="1">Lipid A 4'-kinase</fullName>
    </alternativeName>
</protein>
<dbReference type="EC" id="2.7.1.130" evidence="1"/>
<dbReference type="EMBL" id="CP000647">
    <property type="protein sequence ID" value="ABR76378.1"/>
    <property type="molecule type" value="Genomic_DNA"/>
</dbReference>
<dbReference type="RefSeq" id="WP_004183546.1">
    <property type="nucleotide sequence ID" value="NC_009648.1"/>
</dbReference>
<dbReference type="SMR" id="A6T707"/>
<dbReference type="STRING" id="272620.KPN_00942"/>
<dbReference type="PaxDb" id="272620-KPN_00942"/>
<dbReference type="EnsemblBacteria" id="ABR76378">
    <property type="protein sequence ID" value="ABR76378"/>
    <property type="gene ID" value="KPN_00942"/>
</dbReference>
<dbReference type="KEGG" id="kpn:KPN_00942"/>
<dbReference type="HOGENOM" id="CLU_038816_2_0_6"/>
<dbReference type="UniPathway" id="UPA00359">
    <property type="reaction ID" value="UER00482"/>
</dbReference>
<dbReference type="Proteomes" id="UP000000265">
    <property type="component" value="Chromosome"/>
</dbReference>
<dbReference type="GO" id="GO:0005886">
    <property type="term" value="C:plasma membrane"/>
    <property type="evidence" value="ECO:0007669"/>
    <property type="project" value="TreeGrafter"/>
</dbReference>
<dbReference type="GO" id="GO:0005524">
    <property type="term" value="F:ATP binding"/>
    <property type="evidence" value="ECO:0007669"/>
    <property type="project" value="UniProtKB-UniRule"/>
</dbReference>
<dbReference type="GO" id="GO:0009029">
    <property type="term" value="F:tetraacyldisaccharide 4'-kinase activity"/>
    <property type="evidence" value="ECO:0007669"/>
    <property type="project" value="UniProtKB-UniRule"/>
</dbReference>
<dbReference type="GO" id="GO:0009245">
    <property type="term" value="P:lipid A biosynthetic process"/>
    <property type="evidence" value="ECO:0007669"/>
    <property type="project" value="UniProtKB-UniRule"/>
</dbReference>
<dbReference type="GO" id="GO:0009244">
    <property type="term" value="P:lipopolysaccharide core region biosynthetic process"/>
    <property type="evidence" value="ECO:0007669"/>
    <property type="project" value="TreeGrafter"/>
</dbReference>
<dbReference type="HAMAP" id="MF_00409">
    <property type="entry name" value="LpxK"/>
    <property type="match status" value="1"/>
</dbReference>
<dbReference type="InterPro" id="IPR003758">
    <property type="entry name" value="LpxK"/>
</dbReference>
<dbReference type="InterPro" id="IPR027417">
    <property type="entry name" value="P-loop_NTPase"/>
</dbReference>
<dbReference type="NCBIfam" id="TIGR00682">
    <property type="entry name" value="lpxK"/>
    <property type="match status" value="1"/>
</dbReference>
<dbReference type="PANTHER" id="PTHR42724">
    <property type="entry name" value="TETRAACYLDISACCHARIDE 4'-KINASE"/>
    <property type="match status" value="1"/>
</dbReference>
<dbReference type="PANTHER" id="PTHR42724:SF1">
    <property type="entry name" value="TETRAACYLDISACCHARIDE 4'-KINASE, MITOCHONDRIAL-RELATED"/>
    <property type="match status" value="1"/>
</dbReference>
<dbReference type="Pfam" id="PF02606">
    <property type="entry name" value="LpxK"/>
    <property type="match status" value="1"/>
</dbReference>
<dbReference type="SUPFAM" id="SSF52540">
    <property type="entry name" value="P-loop containing nucleoside triphosphate hydrolases"/>
    <property type="match status" value="1"/>
</dbReference>
<sequence length="326" mass="35555">MIARIWSGESPLWRLLLPLSWLYGLVSGVIRLSYQLGWQKAWRAPVPVVVVGNLTAGGNGKTPVVIWLVEQLQQRGIRVGVVSRGYGGKAERYPLVLDDRTSTALAGDEPVLIHQRTGAPVAVAPLRSDAVKALLSAHDLQMIVTDDGLQHYKLARDREIVVIDGVRRFGNGWWLPAGPMRERASRLQSVDAVIVNGGVARPGEIPMRLRPGMAVNLLTGERRDVSTFTNVVAMAGIGHPPRFFATLESCGVQPVKTVALADHQALSQADVAALVTADQTLLMTEKDAVKCRDFAAANWWYLPVDAIMADERAQRLLADLATLAQR</sequence>